<accession>B0USI5</accession>
<feature type="chain" id="PRO_1000120312" description="GMP synthase [glutamine-hydrolyzing]">
    <location>
        <begin position="1"/>
        <end position="523"/>
    </location>
</feature>
<feature type="domain" description="Glutamine amidotransferase type-1" evidence="1">
    <location>
        <begin position="8"/>
        <end position="205"/>
    </location>
</feature>
<feature type="domain" description="GMPS ATP-PPase" evidence="1">
    <location>
        <begin position="206"/>
        <end position="398"/>
    </location>
</feature>
<feature type="active site" description="Nucleophile" evidence="1">
    <location>
        <position position="85"/>
    </location>
</feature>
<feature type="active site" evidence="1">
    <location>
        <position position="179"/>
    </location>
</feature>
<feature type="active site" evidence="1">
    <location>
        <position position="181"/>
    </location>
</feature>
<feature type="binding site" evidence="1">
    <location>
        <begin position="233"/>
        <end position="239"/>
    </location>
    <ligand>
        <name>ATP</name>
        <dbReference type="ChEBI" id="CHEBI:30616"/>
    </ligand>
</feature>
<proteinExistence type="inferred from homology"/>
<reference key="1">
    <citation type="submission" date="2008-02" db="EMBL/GenBank/DDBJ databases">
        <title>Complete sequence of Haemophilus somnus 2336.</title>
        <authorList>
            <consortium name="US DOE Joint Genome Institute"/>
            <person name="Siddaramappa S."/>
            <person name="Duncan A.J."/>
            <person name="Challacombe J.F."/>
            <person name="Rainey D."/>
            <person name="Gillaspy A.F."/>
            <person name="Carson M."/>
            <person name="Gipson J."/>
            <person name="Gipson M."/>
            <person name="Bruce D."/>
            <person name="Detter J.C."/>
            <person name="Han C.S."/>
            <person name="Land M."/>
            <person name="Tapia R."/>
            <person name="Thompson L.S."/>
            <person name="Orvis J."/>
            <person name="Zaitshik J."/>
            <person name="Barnes G."/>
            <person name="Brettin T.S."/>
            <person name="Dyer D.W."/>
            <person name="Inzana T.J."/>
        </authorList>
    </citation>
    <scope>NUCLEOTIDE SEQUENCE [LARGE SCALE GENOMIC DNA]</scope>
    <source>
        <strain>2336</strain>
    </source>
</reference>
<comment type="function">
    <text evidence="1">Catalyzes the synthesis of GMP from XMP.</text>
</comment>
<comment type="catalytic activity">
    <reaction evidence="1">
        <text>XMP + L-glutamine + ATP + H2O = GMP + L-glutamate + AMP + diphosphate + 2 H(+)</text>
        <dbReference type="Rhea" id="RHEA:11680"/>
        <dbReference type="ChEBI" id="CHEBI:15377"/>
        <dbReference type="ChEBI" id="CHEBI:15378"/>
        <dbReference type="ChEBI" id="CHEBI:29985"/>
        <dbReference type="ChEBI" id="CHEBI:30616"/>
        <dbReference type="ChEBI" id="CHEBI:33019"/>
        <dbReference type="ChEBI" id="CHEBI:57464"/>
        <dbReference type="ChEBI" id="CHEBI:58115"/>
        <dbReference type="ChEBI" id="CHEBI:58359"/>
        <dbReference type="ChEBI" id="CHEBI:456215"/>
        <dbReference type="EC" id="6.3.5.2"/>
    </reaction>
</comment>
<comment type="pathway">
    <text evidence="1">Purine metabolism; GMP biosynthesis; GMP from XMP (L-Gln route): step 1/1.</text>
</comment>
<comment type="subunit">
    <text evidence="1">Homodimer.</text>
</comment>
<dbReference type="EC" id="6.3.5.2" evidence="1"/>
<dbReference type="EMBL" id="CP000947">
    <property type="protein sequence ID" value="ACA32414.1"/>
    <property type="molecule type" value="Genomic_DNA"/>
</dbReference>
<dbReference type="RefSeq" id="WP_012341571.1">
    <property type="nucleotide sequence ID" value="NC_010519.1"/>
</dbReference>
<dbReference type="SMR" id="B0USI5"/>
<dbReference type="STRING" id="228400.HSM_0746"/>
<dbReference type="MEROPS" id="C26.957"/>
<dbReference type="GeneID" id="31487033"/>
<dbReference type="KEGG" id="hsm:HSM_0746"/>
<dbReference type="HOGENOM" id="CLU_014340_0_5_6"/>
<dbReference type="UniPathway" id="UPA00189">
    <property type="reaction ID" value="UER00296"/>
</dbReference>
<dbReference type="GO" id="GO:0005829">
    <property type="term" value="C:cytosol"/>
    <property type="evidence" value="ECO:0007669"/>
    <property type="project" value="TreeGrafter"/>
</dbReference>
<dbReference type="GO" id="GO:0005524">
    <property type="term" value="F:ATP binding"/>
    <property type="evidence" value="ECO:0007669"/>
    <property type="project" value="UniProtKB-UniRule"/>
</dbReference>
<dbReference type="GO" id="GO:0003921">
    <property type="term" value="F:GMP synthase activity"/>
    <property type="evidence" value="ECO:0007669"/>
    <property type="project" value="InterPro"/>
</dbReference>
<dbReference type="CDD" id="cd01742">
    <property type="entry name" value="GATase1_GMP_Synthase"/>
    <property type="match status" value="1"/>
</dbReference>
<dbReference type="CDD" id="cd01997">
    <property type="entry name" value="GMP_synthase_C"/>
    <property type="match status" value="1"/>
</dbReference>
<dbReference type="FunFam" id="3.30.300.10:FF:000002">
    <property type="entry name" value="GMP synthase [glutamine-hydrolyzing]"/>
    <property type="match status" value="1"/>
</dbReference>
<dbReference type="FunFam" id="3.40.50.620:FF:000001">
    <property type="entry name" value="GMP synthase [glutamine-hydrolyzing]"/>
    <property type="match status" value="1"/>
</dbReference>
<dbReference type="FunFam" id="3.40.50.880:FF:000001">
    <property type="entry name" value="GMP synthase [glutamine-hydrolyzing]"/>
    <property type="match status" value="1"/>
</dbReference>
<dbReference type="Gene3D" id="3.30.300.10">
    <property type="match status" value="1"/>
</dbReference>
<dbReference type="Gene3D" id="3.40.50.880">
    <property type="match status" value="1"/>
</dbReference>
<dbReference type="Gene3D" id="3.40.50.620">
    <property type="entry name" value="HUPs"/>
    <property type="match status" value="1"/>
</dbReference>
<dbReference type="HAMAP" id="MF_00344">
    <property type="entry name" value="GMP_synthase"/>
    <property type="match status" value="1"/>
</dbReference>
<dbReference type="InterPro" id="IPR029062">
    <property type="entry name" value="Class_I_gatase-like"/>
</dbReference>
<dbReference type="InterPro" id="IPR017926">
    <property type="entry name" value="GATASE"/>
</dbReference>
<dbReference type="InterPro" id="IPR001674">
    <property type="entry name" value="GMP_synth_C"/>
</dbReference>
<dbReference type="InterPro" id="IPR004739">
    <property type="entry name" value="GMP_synth_GATase"/>
</dbReference>
<dbReference type="InterPro" id="IPR022955">
    <property type="entry name" value="GMP_synthase"/>
</dbReference>
<dbReference type="InterPro" id="IPR025777">
    <property type="entry name" value="GMPS_ATP_PPase_dom"/>
</dbReference>
<dbReference type="InterPro" id="IPR022310">
    <property type="entry name" value="NAD/GMP_synthase"/>
</dbReference>
<dbReference type="InterPro" id="IPR014729">
    <property type="entry name" value="Rossmann-like_a/b/a_fold"/>
</dbReference>
<dbReference type="NCBIfam" id="TIGR00884">
    <property type="entry name" value="guaA_Cterm"/>
    <property type="match status" value="1"/>
</dbReference>
<dbReference type="NCBIfam" id="TIGR00888">
    <property type="entry name" value="guaA_Nterm"/>
    <property type="match status" value="1"/>
</dbReference>
<dbReference type="NCBIfam" id="NF000848">
    <property type="entry name" value="PRK00074.1"/>
    <property type="match status" value="1"/>
</dbReference>
<dbReference type="PANTHER" id="PTHR11922:SF2">
    <property type="entry name" value="GMP SYNTHASE [GLUTAMINE-HYDROLYZING]"/>
    <property type="match status" value="1"/>
</dbReference>
<dbReference type="PANTHER" id="PTHR11922">
    <property type="entry name" value="GMP SYNTHASE-RELATED"/>
    <property type="match status" value="1"/>
</dbReference>
<dbReference type="Pfam" id="PF00117">
    <property type="entry name" value="GATase"/>
    <property type="match status" value="1"/>
</dbReference>
<dbReference type="Pfam" id="PF00958">
    <property type="entry name" value="GMP_synt_C"/>
    <property type="match status" value="1"/>
</dbReference>
<dbReference type="Pfam" id="PF02540">
    <property type="entry name" value="NAD_synthase"/>
    <property type="match status" value="1"/>
</dbReference>
<dbReference type="PRINTS" id="PR00097">
    <property type="entry name" value="ANTSNTHASEII"/>
</dbReference>
<dbReference type="PRINTS" id="PR00099">
    <property type="entry name" value="CPSGATASE"/>
</dbReference>
<dbReference type="PRINTS" id="PR00096">
    <property type="entry name" value="GATASE"/>
</dbReference>
<dbReference type="SUPFAM" id="SSF52402">
    <property type="entry name" value="Adenine nucleotide alpha hydrolases-like"/>
    <property type="match status" value="1"/>
</dbReference>
<dbReference type="SUPFAM" id="SSF52317">
    <property type="entry name" value="Class I glutamine amidotransferase-like"/>
    <property type="match status" value="1"/>
</dbReference>
<dbReference type="SUPFAM" id="SSF54810">
    <property type="entry name" value="GMP synthetase C-terminal dimerisation domain"/>
    <property type="match status" value="1"/>
</dbReference>
<dbReference type="PROSITE" id="PS51273">
    <property type="entry name" value="GATASE_TYPE_1"/>
    <property type="match status" value="1"/>
</dbReference>
<dbReference type="PROSITE" id="PS51553">
    <property type="entry name" value="GMPS_ATP_PPASE"/>
    <property type="match status" value="1"/>
</dbReference>
<evidence type="ECO:0000255" key="1">
    <source>
        <dbReference type="HAMAP-Rule" id="MF_00344"/>
    </source>
</evidence>
<name>GUAA_HISS2</name>
<keyword id="KW-0067">ATP-binding</keyword>
<keyword id="KW-0315">Glutamine amidotransferase</keyword>
<keyword id="KW-0332">GMP biosynthesis</keyword>
<keyword id="KW-0436">Ligase</keyword>
<keyword id="KW-0547">Nucleotide-binding</keyword>
<keyword id="KW-0658">Purine biosynthesis</keyword>
<gene>
    <name evidence="1" type="primary">guaA</name>
    <name type="ordered locus">HSM_0746</name>
</gene>
<organism>
    <name type="scientific">Histophilus somni (strain 2336)</name>
    <name type="common">Haemophilus somnus</name>
    <dbReference type="NCBI Taxonomy" id="228400"/>
    <lineage>
        <taxon>Bacteria</taxon>
        <taxon>Pseudomonadati</taxon>
        <taxon>Pseudomonadota</taxon>
        <taxon>Gammaproteobacteria</taxon>
        <taxon>Pasteurellales</taxon>
        <taxon>Pasteurellaceae</taxon>
        <taxon>Histophilus</taxon>
    </lineage>
</organism>
<protein>
    <recommendedName>
        <fullName evidence="1">GMP synthase [glutamine-hydrolyzing]</fullName>
        <ecNumber evidence="1">6.3.5.2</ecNumber>
    </recommendedName>
    <alternativeName>
        <fullName evidence="1">GMP synthetase</fullName>
    </alternativeName>
    <alternativeName>
        <fullName evidence="1">Glutamine amidotransferase</fullName>
    </alternativeName>
</protein>
<sequence>MTNIHHHKILILDFGSQYTQLIARRVREIGVYCELWAWDVTEEQIREFNPTGIILSGGPESTTEANSPRATEYVFNAGVPVLGICYGMQTMAMQLGGLTETSTHREFGYAEVSLQNPTALFADLNDDLTACDPKLDVWMSHGDKVTRLPDNFQITGMTSTCPIAAMSDESRRFYCVQFHPEVTHTKCGQKLLQNFVVDICGCETNWTAENIIEDAVARIKAQVGDDEVILGLSGGVDSSVTALLLHRAIGKNLHCVFVDNGLLRLNEGDQVMEMFGDKFGLNIIRVEAEDRFLEALKGIDEPEAKRKTIGKVFVDVFDDEAKKLTDVKWLAQGTIYPDVIESAASKTGKAHVIKSHHNVGGLPDYMKLGLVEPLRELFKDEVRKIGLALGLPAEMLNRHPFPGPGLGVRVLGEIKKEYCDLLRKADAIFIEELHKADWYYKVSQAFGVFLPVKSVGVMGDGRKYDWVISLRAVETIDFMTAHWANLPYDLLGKISNRIINEVNGISRVVYDISGKPPATIEWE</sequence>